<organism>
    <name type="scientific">Paracoccus denitrificans (strain Pd 1222)</name>
    <dbReference type="NCBI Taxonomy" id="318586"/>
    <lineage>
        <taxon>Bacteria</taxon>
        <taxon>Pseudomonadati</taxon>
        <taxon>Pseudomonadota</taxon>
        <taxon>Alphaproteobacteria</taxon>
        <taxon>Rhodobacterales</taxon>
        <taxon>Paracoccaceae</taxon>
        <taxon>Paracoccus</taxon>
    </lineage>
</organism>
<keyword id="KW-0963">Cytoplasm</keyword>
<keyword id="KW-0378">Hydrolase</keyword>
<keyword id="KW-1185">Reference proteome</keyword>
<keyword id="KW-0694">RNA-binding</keyword>
<keyword id="KW-0820">tRNA-binding</keyword>
<proteinExistence type="inferred from homology"/>
<accession>A1B2U5</accession>
<gene>
    <name evidence="1" type="primary">dtd</name>
    <name type="ordered locus">Pden_1742</name>
</gene>
<dbReference type="EC" id="3.1.1.96" evidence="1"/>
<dbReference type="EMBL" id="CP000489">
    <property type="protein sequence ID" value="ABL69839.1"/>
    <property type="molecule type" value="Genomic_DNA"/>
</dbReference>
<dbReference type="RefSeq" id="WP_011748037.1">
    <property type="nucleotide sequence ID" value="NC_008686.1"/>
</dbReference>
<dbReference type="SMR" id="A1B2U5"/>
<dbReference type="STRING" id="318586.Pden_1742"/>
<dbReference type="EnsemblBacteria" id="ABL69839">
    <property type="protein sequence ID" value="ABL69839"/>
    <property type="gene ID" value="Pden_1742"/>
</dbReference>
<dbReference type="GeneID" id="93450134"/>
<dbReference type="KEGG" id="pde:Pden_1742"/>
<dbReference type="eggNOG" id="COG1490">
    <property type="taxonomic scope" value="Bacteria"/>
</dbReference>
<dbReference type="HOGENOM" id="CLU_076901_1_1_5"/>
<dbReference type="OrthoDB" id="9801395at2"/>
<dbReference type="Proteomes" id="UP000000361">
    <property type="component" value="Chromosome 1"/>
</dbReference>
<dbReference type="GO" id="GO:0005737">
    <property type="term" value="C:cytoplasm"/>
    <property type="evidence" value="ECO:0007669"/>
    <property type="project" value="UniProtKB-SubCell"/>
</dbReference>
<dbReference type="GO" id="GO:0051500">
    <property type="term" value="F:D-tyrosyl-tRNA(Tyr) deacylase activity"/>
    <property type="evidence" value="ECO:0007669"/>
    <property type="project" value="TreeGrafter"/>
</dbReference>
<dbReference type="GO" id="GO:0106026">
    <property type="term" value="F:Gly-tRNA(Ala) deacylase activity"/>
    <property type="evidence" value="ECO:0007669"/>
    <property type="project" value="UniProtKB-UniRule"/>
</dbReference>
<dbReference type="GO" id="GO:0043908">
    <property type="term" value="F:Ser(Gly)-tRNA(Ala) hydrolase activity"/>
    <property type="evidence" value="ECO:0007669"/>
    <property type="project" value="UniProtKB-UniRule"/>
</dbReference>
<dbReference type="GO" id="GO:0000049">
    <property type="term" value="F:tRNA binding"/>
    <property type="evidence" value="ECO:0007669"/>
    <property type="project" value="UniProtKB-UniRule"/>
</dbReference>
<dbReference type="GO" id="GO:0019478">
    <property type="term" value="P:D-amino acid catabolic process"/>
    <property type="evidence" value="ECO:0007669"/>
    <property type="project" value="UniProtKB-UniRule"/>
</dbReference>
<dbReference type="CDD" id="cd00563">
    <property type="entry name" value="Dtyr_deacylase"/>
    <property type="match status" value="1"/>
</dbReference>
<dbReference type="FunFam" id="3.50.80.10:FF:000001">
    <property type="entry name" value="D-aminoacyl-tRNA deacylase"/>
    <property type="match status" value="1"/>
</dbReference>
<dbReference type="Gene3D" id="3.50.80.10">
    <property type="entry name" value="D-tyrosyl-tRNA(Tyr) deacylase"/>
    <property type="match status" value="1"/>
</dbReference>
<dbReference type="HAMAP" id="MF_00518">
    <property type="entry name" value="Deacylase_Dtd"/>
    <property type="match status" value="1"/>
</dbReference>
<dbReference type="InterPro" id="IPR003732">
    <property type="entry name" value="Daa-tRNA_deacyls_DTD"/>
</dbReference>
<dbReference type="InterPro" id="IPR023509">
    <property type="entry name" value="DTD-like_sf"/>
</dbReference>
<dbReference type="NCBIfam" id="TIGR00256">
    <property type="entry name" value="D-aminoacyl-tRNA deacylase"/>
    <property type="match status" value="1"/>
</dbReference>
<dbReference type="PANTHER" id="PTHR10472:SF5">
    <property type="entry name" value="D-AMINOACYL-TRNA DEACYLASE 1"/>
    <property type="match status" value="1"/>
</dbReference>
<dbReference type="PANTHER" id="PTHR10472">
    <property type="entry name" value="D-TYROSYL-TRNA TYR DEACYLASE"/>
    <property type="match status" value="1"/>
</dbReference>
<dbReference type="Pfam" id="PF02580">
    <property type="entry name" value="Tyr_Deacylase"/>
    <property type="match status" value="1"/>
</dbReference>
<dbReference type="SUPFAM" id="SSF69500">
    <property type="entry name" value="DTD-like"/>
    <property type="match status" value="1"/>
</dbReference>
<reference key="1">
    <citation type="submission" date="2006-12" db="EMBL/GenBank/DDBJ databases">
        <title>Complete sequence of chromosome 1 of Paracoccus denitrificans PD1222.</title>
        <authorList>
            <person name="Copeland A."/>
            <person name="Lucas S."/>
            <person name="Lapidus A."/>
            <person name="Barry K."/>
            <person name="Detter J.C."/>
            <person name="Glavina del Rio T."/>
            <person name="Hammon N."/>
            <person name="Israni S."/>
            <person name="Dalin E."/>
            <person name="Tice H."/>
            <person name="Pitluck S."/>
            <person name="Munk A.C."/>
            <person name="Brettin T."/>
            <person name="Bruce D."/>
            <person name="Han C."/>
            <person name="Tapia R."/>
            <person name="Gilna P."/>
            <person name="Schmutz J."/>
            <person name="Larimer F."/>
            <person name="Land M."/>
            <person name="Hauser L."/>
            <person name="Kyrpides N."/>
            <person name="Lykidis A."/>
            <person name="Spiro S."/>
            <person name="Richardson D.J."/>
            <person name="Moir J.W.B."/>
            <person name="Ferguson S.J."/>
            <person name="van Spanning R.J.M."/>
            <person name="Richardson P."/>
        </authorList>
    </citation>
    <scope>NUCLEOTIDE SEQUENCE [LARGE SCALE GENOMIC DNA]</scope>
    <source>
        <strain>Pd 1222</strain>
    </source>
</reference>
<feature type="chain" id="PRO_1000050864" description="D-aminoacyl-tRNA deacylase">
    <location>
        <begin position="1"/>
        <end position="149"/>
    </location>
</feature>
<feature type="short sequence motif" description="Gly-cisPro motif, important for rejection of L-amino acids" evidence="1">
    <location>
        <begin position="137"/>
        <end position="138"/>
    </location>
</feature>
<comment type="function">
    <text evidence="1">An aminoacyl-tRNA editing enzyme that deacylates mischarged D-aminoacyl-tRNAs. Also deacylates mischarged glycyl-tRNA(Ala), protecting cells against glycine mischarging by AlaRS. Acts via tRNA-based rather than protein-based catalysis; rejects L-amino acids rather than detecting D-amino acids in the active site. By recycling D-aminoacyl-tRNA to D-amino acids and free tRNA molecules, this enzyme counteracts the toxicity associated with the formation of D-aminoacyl-tRNA entities in vivo and helps enforce protein L-homochirality.</text>
</comment>
<comment type="catalytic activity">
    <reaction evidence="1">
        <text>glycyl-tRNA(Ala) + H2O = tRNA(Ala) + glycine + H(+)</text>
        <dbReference type="Rhea" id="RHEA:53744"/>
        <dbReference type="Rhea" id="RHEA-COMP:9657"/>
        <dbReference type="Rhea" id="RHEA-COMP:13640"/>
        <dbReference type="ChEBI" id="CHEBI:15377"/>
        <dbReference type="ChEBI" id="CHEBI:15378"/>
        <dbReference type="ChEBI" id="CHEBI:57305"/>
        <dbReference type="ChEBI" id="CHEBI:78442"/>
        <dbReference type="ChEBI" id="CHEBI:78522"/>
        <dbReference type="EC" id="3.1.1.96"/>
    </reaction>
</comment>
<comment type="catalytic activity">
    <reaction evidence="1">
        <text>a D-aminoacyl-tRNA + H2O = a tRNA + a D-alpha-amino acid + H(+)</text>
        <dbReference type="Rhea" id="RHEA:13953"/>
        <dbReference type="Rhea" id="RHEA-COMP:10123"/>
        <dbReference type="Rhea" id="RHEA-COMP:10124"/>
        <dbReference type="ChEBI" id="CHEBI:15377"/>
        <dbReference type="ChEBI" id="CHEBI:15378"/>
        <dbReference type="ChEBI" id="CHEBI:59871"/>
        <dbReference type="ChEBI" id="CHEBI:78442"/>
        <dbReference type="ChEBI" id="CHEBI:79333"/>
        <dbReference type="EC" id="3.1.1.96"/>
    </reaction>
</comment>
<comment type="subunit">
    <text evidence="1">Homodimer.</text>
</comment>
<comment type="subcellular location">
    <subcellularLocation>
        <location evidence="1">Cytoplasm</location>
    </subcellularLocation>
</comment>
<comment type="domain">
    <text evidence="1">A Gly-cisPro motif from one monomer fits into the active site of the other monomer to allow specific chiral rejection of L-amino acids.</text>
</comment>
<comment type="similarity">
    <text evidence="1">Belongs to the DTD family.</text>
</comment>
<sequence>MRALIQRVSRAEVTVEGSSIGRIGPGLLVLVCAMRGDPEDAAEKLAARVAKLRIFRDEADKMNRSVQDIGGAVLVVSQFTLAADTRTGNRPGFSSAEAPERGEALYLRFAEALRALGLPVETGAFGADMKVSLVNDGPVTIWMDSADRA</sequence>
<name>DTD_PARDP</name>
<protein>
    <recommendedName>
        <fullName evidence="1">D-aminoacyl-tRNA deacylase</fullName>
        <shortName evidence="1">DTD</shortName>
        <ecNumber evidence="1">3.1.1.96</ecNumber>
    </recommendedName>
    <alternativeName>
        <fullName evidence="1">Gly-tRNA(Ala) deacylase</fullName>
    </alternativeName>
</protein>
<evidence type="ECO:0000255" key="1">
    <source>
        <dbReference type="HAMAP-Rule" id="MF_00518"/>
    </source>
</evidence>